<accession>Q07YV2</accession>
<name>ANMK_SHEFN</name>
<keyword id="KW-0067">ATP-binding</keyword>
<keyword id="KW-0119">Carbohydrate metabolism</keyword>
<keyword id="KW-0418">Kinase</keyword>
<keyword id="KW-0547">Nucleotide-binding</keyword>
<keyword id="KW-1185">Reference proteome</keyword>
<keyword id="KW-0808">Transferase</keyword>
<protein>
    <recommendedName>
        <fullName evidence="1">Anhydro-N-acetylmuramic acid kinase</fullName>
        <ecNumber evidence="1">2.7.1.170</ecNumber>
    </recommendedName>
    <alternativeName>
        <fullName evidence="1">AnhMurNAc kinase</fullName>
    </alternativeName>
</protein>
<gene>
    <name evidence="1" type="primary">anmK</name>
    <name type="ordered locus">Sfri_2973</name>
</gene>
<dbReference type="EC" id="2.7.1.170" evidence="1"/>
<dbReference type="EMBL" id="CP000447">
    <property type="protein sequence ID" value="ABI72812.1"/>
    <property type="molecule type" value="Genomic_DNA"/>
</dbReference>
<dbReference type="RefSeq" id="WP_011638421.1">
    <property type="nucleotide sequence ID" value="NC_008345.1"/>
</dbReference>
<dbReference type="SMR" id="Q07YV2"/>
<dbReference type="STRING" id="318167.Sfri_2973"/>
<dbReference type="KEGG" id="sfr:Sfri_2973"/>
<dbReference type="eggNOG" id="COG2377">
    <property type="taxonomic scope" value="Bacteria"/>
</dbReference>
<dbReference type="HOGENOM" id="CLU_038782_0_0_6"/>
<dbReference type="OrthoDB" id="9763949at2"/>
<dbReference type="UniPathway" id="UPA00343"/>
<dbReference type="UniPathway" id="UPA00544"/>
<dbReference type="Proteomes" id="UP000000684">
    <property type="component" value="Chromosome"/>
</dbReference>
<dbReference type="GO" id="GO:0005524">
    <property type="term" value="F:ATP binding"/>
    <property type="evidence" value="ECO:0007669"/>
    <property type="project" value="UniProtKB-UniRule"/>
</dbReference>
<dbReference type="GO" id="GO:0016301">
    <property type="term" value="F:kinase activity"/>
    <property type="evidence" value="ECO:0007669"/>
    <property type="project" value="UniProtKB-KW"/>
</dbReference>
<dbReference type="GO" id="GO:0016773">
    <property type="term" value="F:phosphotransferase activity, alcohol group as acceptor"/>
    <property type="evidence" value="ECO:0007669"/>
    <property type="project" value="UniProtKB-UniRule"/>
</dbReference>
<dbReference type="GO" id="GO:0097175">
    <property type="term" value="P:1,6-anhydro-N-acetyl-beta-muramic acid catabolic process"/>
    <property type="evidence" value="ECO:0007669"/>
    <property type="project" value="UniProtKB-UniRule"/>
</dbReference>
<dbReference type="GO" id="GO:0006040">
    <property type="term" value="P:amino sugar metabolic process"/>
    <property type="evidence" value="ECO:0007669"/>
    <property type="project" value="InterPro"/>
</dbReference>
<dbReference type="GO" id="GO:0009254">
    <property type="term" value="P:peptidoglycan turnover"/>
    <property type="evidence" value="ECO:0007669"/>
    <property type="project" value="UniProtKB-UniRule"/>
</dbReference>
<dbReference type="CDD" id="cd24050">
    <property type="entry name" value="ASKHA_NBD_ANMK"/>
    <property type="match status" value="1"/>
</dbReference>
<dbReference type="Gene3D" id="3.30.420.40">
    <property type="match status" value="2"/>
</dbReference>
<dbReference type="HAMAP" id="MF_01270">
    <property type="entry name" value="AnhMurNAc_kinase"/>
    <property type="match status" value="1"/>
</dbReference>
<dbReference type="InterPro" id="IPR005338">
    <property type="entry name" value="Anhydro_N_Ac-Mur_kinase"/>
</dbReference>
<dbReference type="InterPro" id="IPR043129">
    <property type="entry name" value="ATPase_NBD"/>
</dbReference>
<dbReference type="NCBIfam" id="NF007139">
    <property type="entry name" value="PRK09585.1-3"/>
    <property type="match status" value="1"/>
</dbReference>
<dbReference type="NCBIfam" id="NF007148">
    <property type="entry name" value="PRK09585.3-2"/>
    <property type="match status" value="1"/>
</dbReference>
<dbReference type="PANTHER" id="PTHR30605">
    <property type="entry name" value="ANHYDRO-N-ACETYLMURAMIC ACID KINASE"/>
    <property type="match status" value="1"/>
</dbReference>
<dbReference type="PANTHER" id="PTHR30605:SF0">
    <property type="entry name" value="ANHYDRO-N-ACETYLMURAMIC ACID KINASE"/>
    <property type="match status" value="1"/>
</dbReference>
<dbReference type="Pfam" id="PF03702">
    <property type="entry name" value="AnmK"/>
    <property type="match status" value="1"/>
</dbReference>
<dbReference type="SUPFAM" id="SSF53067">
    <property type="entry name" value="Actin-like ATPase domain"/>
    <property type="match status" value="1"/>
</dbReference>
<sequence>MSKPEYFIGLMSGTSMDGVDAVLVDFSAEHPVLIASHTEAIPAHLLKGLQRLCQPETDEINRLGRLDRSVGKLFAQAVNHLLAKTTVTAAEVIAIGSHGQTVRHMPNLEMGFTLQIGDPNTIAIETNIDVIADFRRKDIALGGQGAPLVPAFHQQVFAQPGHSRVILNIGGIANITYLPGNSEQVLGFDTGPGNNLIDAFIQQNLNQPFDEDGAWADSGTTHPDLLKQLLSHSYFSLAYPKSTGRELFNRAWLEQQLADYSHLDQQDIQSTLLDLTCHSIANDINKLSPNGELFVCGGGALNKALMQRLATLVPGYKVDTTSALGVDAKWVEGIAFAWLAMRYHHDLPANLPAVTGASRTAILGGRFKAR</sequence>
<feature type="chain" id="PRO_1000067362" description="Anhydro-N-acetylmuramic acid kinase">
    <location>
        <begin position="1"/>
        <end position="370"/>
    </location>
</feature>
<feature type="binding site" evidence="1">
    <location>
        <begin position="13"/>
        <end position="20"/>
    </location>
    <ligand>
        <name>ATP</name>
        <dbReference type="ChEBI" id="CHEBI:30616"/>
    </ligand>
</feature>
<organism>
    <name type="scientific">Shewanella frigidimarina (strain NCIMB 400)</name>
    <dbReference type="NCBI Taxonomy" id="318167"/>
    <lineage>
        <taxon>Bacteria</taxon>
        <taxon>Pseudomonadati</taxon>
        <taxon>Pseudomonadota</taxon>
        <taxon>Gammaproteobacteria</taxon>
        <taxon>Alteromonadales</taxon>
        <taxon>Shewanellaceae</taxon>
        <taxon>Shewanella</taxon>
    </lineage>
</organism>
<reference key="1">
    <citation type="submission" date="2006-08" db="EMBL/GenBank/DDBJ databases">
        <title>Complete sequence of Shewanella frigidimarina NCIMB 400.</title>
        <authorList>
            <consortium name="US DOE Joint Genome Institute"/>
            <person name="Copeland A."/>
            <person name="Lucas S."/>
            <person name="Lapidus A."/>
            <person name="Barry K."/>
            <person name="Detter J.C."/>
            <person name="Glavina del Rio T."/>
            <person name="Hammon N."/>
            <person name="Israni S."/>
            <person name="Dalin E."/>
            <person name="Tice H."/>
            <person name="Pitluck S."/>
            <person name="Fredrickson J.K."/>
            <person name="Kolker E."/>
            <person name="McCuel L.A."/>
            <person name="DiChristina T."/>
            <person name="Nealson K.H."/>
            <person name="Newman D."/>
            <person name="Tiedje J.M."/>
            <person name="Zhou J."/>
            <person name="Romine M.F."/>
            <person name="Culley D.E."/>
            <person name="Serres M."/>
            <person name="Chertkov O."/>
            <person name="Brettin T."/>
            <person name="Bruce D."/>
            <person name="Han C."/>
            <person name="Tapia R."/>
            <person name="Gilna P."/>
            <person name="Schmutz J."/>
            <person name="Larimer F."/>
            <person name="Land M."/>
            <person name="Hauser L."/>
            <person name="Kyrpides N."/>
            <person name="Mikhailova N."/>
            <person name="Richardson P."/>
        </authorList>
    </citation>
    <scope>NUCLEOTIDE SEQUENCE [LARGE SCALE GENOMIC DNA]</scope>
    <source>
        <strain>NCIMB 400</strain>
    </source>
</reference>
<proteinExistence type="inferred from homology"/>
<evidence type="ECO:0000255" key="1">
    <source>
        <dbReference type="HAMAP-Rule" id="MF_01270"/>
    </source>
</evidence>
<comment type="function">
    <text evidence="1">Catalyzes the specific phosphorylation of 1,6-anhydro-N-acetylmuramic acid (anhMurNAc) with the simultaneous cleavage of the 1,6-anhydro ring, generating MurNAc-6-P. Is required for the utilization of anhMurNAc either imported from the medium or derived from its own cell wall murein, and thus plays a role in cell wall recycling.</text>
</comment>
<comment type="catalytic activity">
    <reaction evidence="1">
        <text>1,6-anhydro-N-acetyl-beta-muramate + ATP + H2O = N-acetyl-D-muramate 6-phosphate + ADP + H(+)</text>
        <dbReference type="Rhea" id="RHEA:24952"/>
        <dbReference type="ChEBI" id="CHEBI:15377"/>
        <dbReference type="ChEBI" id="CHEBI:15378"/>
        <dbReference type="ChEBI" id="CHEBI:30616"/>
        <dbReference type="ChEBI" id="CHEBI:58690"/>
        <dbReference type="ChEBI" id="CHEBI:58722"/>
        <dbReference type="ChEBI" id="CHEBI:456216"/>
        <dbReference type="EC" id="2.7.1.170"/>
    </reaction>
</comment>
<comment type="pathway">
    <text evidence="1">Amino-sugar metabolism; 1,6-anhydro-N-acetylmuramate degradation.</text>
</comment>
<comment type="pathway">
    <text evidence="1">Cell wall biogenesis; peptidoglycan recycling.</text>
</comment>
<comment type="similarity">
    <text evidence="1">Belongs to the anhydro-N-acetylmuramic acid kinase family.</text>
</comment>